<comment type="function">
    <text evidence="1">Metallothiol transferase which confers resistance to fosfomycin by catalyzing the addition of a thiol cofactor to fosfomycin. L-cysteine is probably the physiological thiol donor.</text>
</comment>
<comment type="cofactor">
    <cofactor evidence="1">
        <name>Mg(2+)</name>
        <dbReference type="ChEBI" id="CHEBI:18420"/>
    </cofactor>
</comment>
<comment type="subunit">
    <text evidence="1">Homodimer.</text>
</comment>
<comment type="subcellular location">
    <subcellularLocation>
        <location evidence="1">Cytoplasm</location>
    </subcellularLocation>
</comment>
<comment type="similarity">
    <text evidence="1">Belongs to the fosfomycin resistance protein family. FosB subfamily.</text>
</comment>
<accession>Q49VY9</accession>
<sequence>MIQSINHVTYSVSDISKSINFYKDILKAKILVESDKTAYFILGGLWLALNEEKDIPRNEIRYSYTHMAFTIEESEFEEWYQWLNDNNVNILEGRTRDVRDKKSIYFTDPDGHKFELHTGTLQDRLDYYKEEKPHMKFYEWDEVDKTDNNRE</sequence>
<protein>
    <recommendedName>
        <fullName evidence="1">Metallothiol transferase FosB</fullName>
        <ecNumber evidence="1">2.5.1.-</ecNumber>
    </recommendedName>
    <alternativeName>
        <fullName evidence="1">Fosfomycin resistance protein</fullName>
    </alternativeName>
</protein>
<gene>
    <name evidence="1" type="primary">fosB</name>
    <name type="ordered locus">SSP1926</name>
</gene>
<proteinExistence type="inferred from homology"/>
<evidence type="ECO:0000255" key="1">
    <source>
        <dbReference type="HAMAP-Rule" id="MF_01512"/>
    </source>
</evidence>
<evidence type="ECO:0000255" key="2">
    <source>
        <dbReference type="PROSITE-ProRule" id="PRU01163"/>
    </source>
</evidence>
<dbReference type="EC" id="2.5.1.-" evidence="1"/>
<dbReference type="EMBL" id="AP008934">
    <property type="protein sequence ID" value="BAE19071.1"/>
    <property type="molecule type" value="Genomic_DNA"/>
</dbReference>
<dbReference type="RefSeq" id="WP_011303596.1">
    <property type="nucleotide sequence ID" value="NC_007350.1"/>
</dbReference>
<dbReference type="SMR" id="Q49VY9"/>
<dbReference type="GeneID" id="3615280"/>
<dbReference type="KEGG" id="ssp:SSP1926"/>
<dbReference type="PATRIC" id="fig|342451.11.peg.1920"/>
<dbReference type="eggNOG" id="COG0346">
    <property type="taxonomic scope" value="Bacteria"/>
</dbReference>
<dbReference type="HOGENOM" id="CLU_121356_0_0_9"/>
<dbReference type="OrthoDB" id="192739at2"/>
<dbReference type="Proteomes" id="UP000006371">
    <property type="component" value="Chromosome"/>
</dbReference>
<dbReference type="GO" id="GO:0005737">
    <property type="term" value="C:cytoplasm"/>
    <property type="evidence" value="ECO:0007669"/>
    <property type="project" value="UniProtKB-SubCell"/>
</dbReference>
<dbReference type="GO" id="GO:0000287">
    <property type="term" value="F:magnesium ion binding"/>
    <property type="evidence" value="ECO:0007669"/>
    <property type="project" value="UniProtKB-UniRule"/>
</dbReference>
<dbReference type="GO" id="GO:0016765">
    <property type="term" value="F:transferase activity, transferring alkyl or aryl (other than methyl) groups"/>
    <property type="evidence" value="ECO:0007669"/>
    <property type="project" value="UniProtKB-UniRule"/>
</dbReference>
<dbReference type="GO" id="GO:0046677">
    <property type="term" value="P:response to antibiotic"/>
    <property type="evidence" value="ECO:0007669"/>
    <property type="project" value="UniProtKB-UniRule"/>
</dbReference>
<dbReference type="CDD" id="cd08363">
    <property type="entry name" value="FosB"/>
    <property type="match status" value="1"/>
</dbReference>
<dbReference type="Gene3D" id="3.10.180.10">
    <property type="entry name" value="2,3-Dihydroxybiphenyl 1,2-Dioxygenase, domain 1"/>
    <property type="match status" value="1"/>
</dbReference>
<dbReference type="HAMAP" id="MF_01512">
    <property type="entry name" value="FosB"/>
    <property type="match status" value="1"/>
</dbReference>
<dbReference type="InterPro" id="IPR051332">
    <property type="entry name" value="Fosfomycin_Res_Enzymes"/>
</dbReference>
<dbReference type="InterPro" id="IPR029068">
    <property type="entry name" value="Glyas_Bleomycin-R_OHBP_Dase"/>
</dbReference>
<dbReference type="InterPro" id="IPR004360">
    <property type="entry name" value="Glyas_Fos-R_dOase_dom"/>
</dbReference>
<dbReference type="InterPro" id="IPR022858">
    <property type="entry name" value="Metallothiol_Trafse_FosB"/>
</dbReference>
<dbReference type="InterPro" id="IPR037523">
    <property type="entry name" value="VOC"/>
</dbReference>
<dbReference type="NCBIfam" id="NF000493">
    <property type="entry name" value="Fos_BSH"/>
    <property type="match status" value="1"/>
</dbReference>
<dbReference type="NCBIfam" id="NF003152">
    <property type="entry name" value="PRK04101.1"/>
    <property type="match status" value="1"/>
</dbReference>
<dbReference type="PANTHER" id="PTHR36113:SF6">
    <property type="entry name" value="FOSFOMYCIN RESISTANCE PROTEIN FOSX"/>
    <property type="match status" value="1"/>
</dbReference>
<dbReference type="PANTHER" id="PTHR36113">
    <property type="entry name" value="LYASE, PUTATIVE-RELATED-RELATED"/>
    <property type="match status" value="1"/>
</dbReference>
<dbReference type="Pfam" id="PF00903">
    <property type="entry name" value="Glyoxalase"/>
    <property type="match status" value="1"/>
</dbReference>
<dbReference type="SUPFAM" id="SSF54593">
    <property type="entry name" value="Glyoxalase/Bleomycin resistance protein/Dihydroxybiphenyl dioxygenase"/>
    <property type="match status" value="1"/>
</dbReference>
<dbReference type="PROSITE" id="PS51819">
    <property type="entry name" value="VOC"/>
    <property type="match status" value="1"/>
</dbReference>
<reference key="1">
    <citation type="journal article" date="2005" name="Proc. Natl. Acad. Sci. U.S.A.">
        <title>Whole genome sequence of Staphylococcus saprophyticus reveals the pathogenesis of uncomplicated urinary tract infection.</title>
        <authorList>
            <person name="Kuroda M."/>
            <person name="Yamashita A."/>
            <person name="Hirakawa H."/>
            <person name="Kumano M."/>
            <person name="Morikawa K."/>
            <person name="Higashide M."/>
            <person name="Maruyama A."/>
            <person name="Inose Y."/>
            <person name="Matoba K."/>
            <person name="Toh H."/>
            <person name="Kuhara S."/>
            <person name="Hattori M."/>
            <person name="Ohta T."/>
        </authorList>
    </citation>
    <scope>NUCLEOTIDE SEQUENCE [LARGE SCALE GENOMIC DNA]</scope>
    <source>
        <strain>ATCC 15305 / DSM 20229 / NCIMB 8711 / NCTC 7292 / S-41</strain>
    </source>
</reference>
<organism>
    <name type="scientific">Staphylococcus saprophyticus subsp. saprophyticus (strain ATCC 15305 / DSM 20229 / NCIMB 8711 / NCTC 7292 / S-41)</name>
    <dbReference type="NCBI Taxonomy" id="342451"/>
    <lineage>
        <taxon>Bacteria</taxon>
        <taxon>Bacillati</taxon>
        <taxon>Bacillota</taxon>
        <taxon>Bacilli</taxon>
        <taxon>Bacillales</taxon>
        <taxon>Staphylococcaceae</taxon>
        <taxon>Staphylococcus</taxon>
    </lineage>
</organism>
<keyword id="KW-0046">Antibiotic resistance</keyword>
<keyword id="KW-0963">Cytoplasm</keyword>
<keyword id="KW-0460">Magnesium</keyword>
<keyword id="KW-0479">Metal-binding</keyword>
<keyword id="KW-1185">Reference proteome</keyword>
<keyword id="KW-0808">Transferase</keyword>
<feature type="chain" id="PRO_0000164042" description="Metallothiol transferase FosB">
    <location>
        <begin position="1"/>
        <end position="151"/>
    </location>
</feature>
<feature type="domain" description="VOC" evidence="2">
    <location>
        <begin position="4"/>
        <end position="119"/>
    </location>
</feature>
<feature type="active site" description="Proton donor/acceptor" evidence="2">
    <location>
        <position position="115"/>
    </location>
</feature>
<feature type="binding site" evidence="1">
    <location>
        <position position="7"/>
    </location>
    <ligand>
        <name>Mg(2+)</name>
        <dbReference type="ChEBI" id="CHEBI:18420"/>
    </ligand>
</feature>
<feature type="binding site" evidence="1">
    <location>
        <position position="66"/>
    </location>
    <ligand>
        <name>Mg(2+)</name>
        <dbReference type="ChEBI" id="CHEBI:18420"/>
    </ligand>
</feature>
<feature type="binding site" evidence="1">
    <location>
        <position position="115"/>
    </location>
    <ligand>
        <name>Mg(2+)</name>
        <dbReference type="ChEBI" id="CHEBI:18420"/>
    </ligand>
</feature>
<name>FOSB_STAS1</name>